<name>EX7L_CLOP1</name>
<dbReference type="EC" id="3.1.11.6" evidence="1"/>
<dbReference type="EMBL" id="CP000246">
    <property type="protein sequence ID" value="ABG84523.1"/>
    <property type="molecule type" value="Genomic_DNA"/>
</dbReference>
<dbReference type="RefSeq" id="WP_003458744.1">
    <property type="nucleotide sequence ID" value="NC_008261.1"/>
</dbReference>
<dbReference type="SMR" id="Q0TPD5"/>
<dbReference type="STRING" id="195103.CPF_2076"/>
<dbReference type="PaxDb" id="195103-CPF_2076"/>
<dbReference type="GeneID" id="93001643"/>
<dbReference type="KEGG" id="cpf:CPF_2076"/>
<dbReference type="eggNOG" id="COG1570">
    <property type="taxonomic scope" value="Bacteria"/>
</dbReference>
<dbReference type="HOGENOM" id="CLU_023625_3_1_9"/>
<dbReference type="Proteomes" id="UP000001823">
    <property type="component" value="Chromosome"/>
</dbReference>
<dbReference type="GO" id="GO:0005737">
    <property type="term" value="C:cytoplasm"/>
    <property type="evidence" value="ECO:0007669"/>
    <property type="project" value="UniProtKB-SubCell"/>
</dbReference>
<dbReference type="GO" id="GO:0009318">
    <property type="term" value="C:exodeoxyribonuclease VII complex"/>
    <property type="evidence" value="ECO:0007669"/>
    <property type="project" value="InterPro"/>
</dbReference>
<dbReference type="GO" id="GO:0008855">
    <property type="term" value="F:exodeoxyribonuclease VII activity"/>
    <property type="evidence" value="ECO:0007669"/>
    <property type="project" value="UniProtKB-UniRule"/>
</dbReference>
<dbReference type="GO" id="GO:0003676">
    <property type="term" value="F:nucleic acid binding"/>
    <property type="evidence" value="ECO:0007669"/>
    <property type="project" value="InterPro"/>
</dbReference>
<dbReference type="GO" id="GO:0006308">
    <property type="term" value="P:DNA catabolic process"/>
    <property type="evidence" value="ECO:0007669"/>
    <property type="project" value="UniProtKB-UniRule"/>
</dbReference>
<dbReference type="CDD" id="cd04489">
    <property type="entry name" value="ExoVII_LU_OBF"/>
    <property type="match status" value="1"/>
</dbReference>
<dbReference type="HAMAP" id="MF_00378">
    <property type="entry name" value="Exonuc_7_L"/>
    <property type="match status" value="1"/>
</dbReference>
<dbReference type="InterPro" id="IPR003753">
    <property type="entry name" value="Exonuc_VII_L"/>
</dbReference>
<dbReference type="InterPro" id="IPR020579">
    <property type="entry name" value="Exonuc_VII_lsu_C"/>
</dbReference>
<dbReference type="InterPro" id="IPR025824">
    <property type="entry name" value="OB-fold_nuc-bd_dom"/>
</dbReference>
<dbReference type="NCBIfam" id="TIGR00237">
    <property type="entry name" value="xseA"/>
    <property type="match status" value="1"/>
</dbReference>
<dbReference type="PANTHER" id="PTHR30008">
    <property type="entry name" value="EXODEOXYRIBONUCLEASE 7 LARGE SUBUNIT"/>
    <property type="match status" value="1"/>
</dbReference>
<dbReference type="PANTHER" id="PTHR30008:SF0">
    <property type="entry name" value="EXODEOXYRIBONUCLEASE 7 LARGE SUBUNIT"/>
    <property type="match status" value="1"/>
</dbReference>
<dbReference type="Pfam" id="PF02601">
    <property type="entry name" value="Exonuc_VII_L"/>
    <property type="match status" value="2"/>
</dbReference>
<dbReference type="Pfam" id="PF13742">
    <property type="entry name" value="tRNA_anti_2"/>
    <property type="match status" value="1"/>
</dbReference>
<accession>Q0TPD5</accession>
<reference key="1">
    <citation type="journal article" date="2006" name="Genome Res.">
        <title>Skewed genomic variability in strains of the toxigenic bacterial pathogen, Clostridium perfringens.</title>
        <authorList>
            <person name="Myers G.S.A."/>
            <person name="Rasko D.A."/>
            <person name="Cheung J.K."/>
            <person name="Ravel J."/>
            <person name="Seshadri R."/>
            <person name="DeBoy R.T."/>
            <person name="Ren Q."/>
            <person name="Varga J."/>
            <person name="Awad M.M."/>
            <person name="Brinkac L.M."/>
            <person name="Daugherty S.C."/>
            <person name="Haft D.H."/>
            <person name="Dodson R.J."/>
            <person name="Madupu R."/>
            <person name="Nelson W.C."/>
            <person name="Rosovitz M.J."/>
            <person name="Sullivan S.A."/>
            <person name="Khouri H."/>
            <person name="Dimitrov G.I."/>
            <person name="Watkins K.L."/>
            <person name="Mulligan S."/>
            <person name="Benton J."/>
            <person name="Radune D."/>
            <person name="Fisher D.J."/>
            <person name="Atkins H.S."/>
            <person name="Hiscox T."/>
            <person name="Jost B.H."/>
            <person name="Billington S.J."/>
            <person name="Songer J.G."/>
            <person name="McClane B.A."/>
            <person name="Titball R.W."/>
            <person name="Rood J.I."/>
            <person name="Melville S.B."/>
            <person name="Paulsen I.T."/>
        </authorList>
    </citation>
    <scope>NUCLEOTIDE SEQUENCE [LARGE SCALE GENOMIC DNA]</scope>
    <source>
        <strain>ATCC 13124 / DSM 756 / JCM 1290 / NCIMB 6125 / NCTC 8237 / S 107 / Type A</strain>
    </source>
</reference>
<protein>
    <recommendedName>
        <fullName evidence="1">Exodeoxyribonuclease 7 large subunit</fullName>
        <ecNumber evidence="1">3.1.11.6</ecNumber>
    </recommendedName>
    <alternativeName>
        <fullName evidence="1">Exodeoxyribonuclease VII large subunit</fullName>
        <shortName evidence="1">Exonuclease VII large subunit</shortName>
    </alternativeName>
</protein>
<evidence type="ECO:0000255" key="1">
    <source>
        <dbReference type="HAMAP-Rule" id="MF_00378"/>
    </source>
</evidence>
<organism>
    <name type="scientific">Clostridium perfringens (strain ATCC 13124 / DSM 756 / JCM 1290 / NCIMB 6125 / NCTC 8237 / Type A)</name>
    <dbReference type="NCBI Taxonomy" id="195103"/>
    <lineage>
        <taxon>Bacteria</taxon>
        <taxon>Bacillati</taxon>
        <taxon>Bacillota</taxon>
        <taxon>Clostridia</taxon>
        <taxon>Eubacteriales</taxon>
        <taxon>Clostridiaceae</taxon>
        <taxon>Clostridium</taxon>
    </lineage>
</organism>
<sequence length="400" mass="45493">MKLKTLSVGEVNNYVKKLVENDFILKNLNVKGEISNLKFHSSGHIYFSLKDENSKVNCIMFKNNAVNLDFRLEEGMKVEIKARLGVYHKEGTYQLYCENIKKAGIGELFEEFHKLKKELSEEGIFDEKYKRALPKFPKRIGIITARTGAAVRDIINVIQRRNKSLDIILYPAKVQGENAADSIIEGIRYFNNEKSVDVIILGRGGGSIEELWTFNNRDLAYEIFNSRIPTVSAVGHEVDFTISDFVSDMRAPTPSAAGELVSPSLQEMINDLLNKKEFLHRAIDRKFLNAKKDVDLLHKGLKGNNPKHIIEKRIKEVNSLEEKLNFLGKRKIDKAKDELIALNSILQTLNPLNTLGRGYSVIMDKKDKVINEVSELKKNDMVKVIMKDGSVNIDIKIINE</sequence>
<proteinExistence type="inferred from homology"/>
<keyword id="KW-0963">Cytoplasm</keyword>
<keyword id="KW-0269">Exonuclease</keyword>
<keyword id="KW-0378">Hydrolase</keyword>
<keyword id="KW-0540">Nuclease</keyword>
<feature type="chain" id="PRO_0000273653" description="Exodeoxyribonuclease 7 large subunit">
    <location>
        <begin position="1"/>
        <end position="400"/>
    </location>
</feature>
<comment type="function">
    <text evidence="1">Bidirectionally degrades single-stranded DNA into large acid-insoluble oligonucleotides, which are then degraded further into small acid-soluble oligonucleotides.</text>
</comment>
<comment type="catalytic activity">
    <reaction evidence="1">
        <text>Exonucleolytic cleavage in either 5'- to 3'- or 3'- to 5'-direction to yield nucleoside 5'-phosphates.</text>
        <dbReference type="EC" id="3.1.11.6"/>
    </reaction>
</comment>
<comment type="subunit">
    <text evidence="1">Heterooligomer composed of large and small subunits.</text>
</comment>
<comment type="subcellular location">
    <subcellularLocation>
        <location evidence="1">Cytoplasm</location>
    </subcellularLocation>
</comment>
<comment type="similarity">
    <text evidence="1">Belongs to the XseA family.</text>
</comment>
<gene>
    <name evidence="1" type="primary">xseA</name>
    <name type="ordered locus">CPF_2076</name>
</gene>